<reference key="1">
    <citation type="journal article" date="2008" name="J. Bacteriol.">
        <title>Genome sequence of Staphylococcus aureus strain Newman and comparative analysis of staphylococcal genomes: polymorphism and evolution of two major pathogenicity islands.</title>
        <authorList>
            <person name="Baba T."/>
            <person name="Bae T."/>
            <person name="Schneewind O."/>
            <person name="Takeuchi F."/>
            <person name="Hiramatsu K."/>
        </authorList>
    </citation>
    <scope>NUCLEOTIDE SEQUENCE [LARGE SCALE GENOMIC DNA]</scope>
    <source>
        <strain>Newman</strain>
    </source>
</reference>
<accession>A6QJL4</accession>
<comment type="catalytic activity">
    <reaction evidence="1">
        <text>2 reduced [2Fe-2S]-[ferredoxin] + NADP(+) + H(+) = 2 oxidized [2Fe-2S]-[ferredoxin] + NADPH</text>
        <dbReference type="Rhea" id="RHEA:20125"/>
        <dbReference type="Rhea" id="RHEA-COMP:10000"/>
        <dbReference type="Rhea" id="RHEA-COMP:10001"/>
        <dbReference type="ChEBI" id="CHEBI:15378"/>
        <dbReference type="ChEBI" id="CHEBI:33737"/>
        <dbReference type="ChEBI" id="CHEBI:33738"/>
        <dbReference type="ChEBI" id="CHEBI:57783"/>
        <dbReference type="ChEBI" id="CHEBI:58349"/>
        <dbReference type="EC" id="1.18.1.2"/>
    </reaction>
</comment>
<comment type="cofactor">
    <cofactor evidence="1">
        <name>FAD</name>
        <dbReference type="ChEBI" id="CHEBI:57692"/>
    </cofactor>
    <text evidence="1">Binds 1 FAD per subunit.</text>
</comment>
<comment type="subunit">
    <text evidence="1">Homodimer.</text>
</comment>
<comment type="similarity">
    <text evidence="1">Belongs to the ferredoxin--NADP reductase type 2 family.</text>
</comment>
<keyword id="KW-0274">FAD</keyword>
<keyword id="KW-0285">Flavoprotein</keyword>
<keyword id="KW-0521">NADP</keyword>
<keyword id="KW-0560">Oxidoreductase</keyword>
<dbReference type="EC" id="1.18.1.2" evidence="1"/>
<dbReference type="EMBL" id="AP009351">
    <property type="protein sequence ID" value="BAF68546.1"/>
    <property type="molecule type" value="Genomic_DNA"/>
</dbReference>
<dbReference type="RefSeq" id="WP_000655971.1">
    <property type="nucleotide sequence ID" value="NZ_JBBIAE010000004.1"/>
</dbReference>
<dbReference type="SMR" id="A6QJL4"/>
<dbReference type="KEGG" id="sae:NWMN_2274"/>
<dbReference type="HOGENOM" id="CLU_031864_5_5_9"/>
<dbReference type="Proteomes" id="UP000006386">
    <property type="component" value="Chromosome"/>
</dbReference>
<dbReference type="GO" id="GO:0004324">
    <property type="term" value="F:ferredoxin-NADP+ reductase activity"/>
    <property type="evidence" value="ECO:0007669"/>
    <property type="project" value="UniProtKB-UniRule"/>
</dbReference>
<dbReference type="GO" id="GO:0050660">
    <property type="term" value="F:flavin adenine dinucleotide binding"/>
    <property type="evidence" value="ECO:0007669"/>
    <property type="project" value="UniProtKB-UniRule"/>
</dbReference>
<dbReference type="GO" id="GO:0050661">
    <property type="term" value="F:NADP binding"/>
    <property type="evidence" value="ECO:0007669"/>
    <property type="project" value="UniProtKB-UniRule"/>
</dbReference>
<dbReference type="Gene3D" id="3.50.50.60">
    <property type="entry name" value="FAD/NAD(P)-binding domain"/>
    <property type="match status" value="2"/>
</dbReference>
<dbReference type="HAMAP" id="MF_01685">
    <property type="entry name" value="FENR2"/>
    <property type="match status" value="1"/>
</dbReference>
<dbReference type="InterPro" id="IPR036188">
    <property type="entry name" value="FAD/NAD-bd_sf"/>
</dbReference>
<dbReference type="InterPro" id="IPR023753">
    <property type="entry name" value="FAD/NAD-binding_dom"/>
</dbReference>
<dbReference type="InterPro" id="IPR022890">
    <property type="entry name" value="Fd--NADP_Rdtase_type_2"/>
</dbReference>
<dbReference type="InterPro" id="IPR050097">
    <property type="entry name" value="Ferredoxin-NADP_redctase_2"/>
</dbReference>
<dbReference type="PANTHER" id="PTHR48105">
    <property type="entry name" value="THIOREDOXIN REDUCTASE 1-RELATED-RELATED"/>
    <property type="match status" value="1"/>
</dbReference>
<dbReference type="Pfam" id="PF07992">
    <property type="entry name" value="Pyr_redox_2"/>
    <property type="match status" value="1"/>
</dbReference>
<dbReference type="PRINTS" id="PR00368">
    <property type="entry name" value="FADPNR"/>
</dbReference>
<dbReference type="PRINTS" id="PR00469">
    <property type="entry name" value="PNDRDTASEII"/>
</dbReference>
<dbReference type="SUPFAM" id="SSF51905">
    <property type="entry name" value="FAD/NAD(P)-binding domain"/>
    <property type="match status" value="1"/>
</dbReference>
<sequence>MKDVTIIGGGPSGLYASFYAGLRDMSVRLIDVQSELGGKMRIYPEKIIWDIGGIAPKPCHEILKDTIKQGLYFKPEVHLNERVVDIRKKAERHFEVETEAGEIYTSKAVIIAIGAGIINPKQLDVKGVERYQLTNLHYVVQSYRRFKDKDVLISGGGNTALDWAHDIAKIAKSVTVVYRKEDVSGHEAMKTLVTDLNVKLCPKTRIKYLVGNDDETHISEVVLEHVESGDRHTVKFDDVIISHGFDRCNTLLSETSSKLDMHDDCRVKGFGNTTTSIPGIYACGDIVYHDAKSHLIASAFSDGANAANLAKTYIQPDANAEGYVSSHHEVFKEANKTIVNKHLY</sequence>
<feature type="chain" id="PRO_0000364945" description="Ferredoxin--NADP reductase">
    <location>
        <begin position="1"/>
        <end position="344"/>
    </location>
</feature>
<feature type="binding site" evidence="1">
    <location>
        <position position="12"/>
    </location>
    <ligand>
        <name>FAD</name>
        <dbReference type="ChEBI" id="CHEBI:57692"/>
    </ligand>
</feature>
<feature type="binding site" evidence="1">
    <location>
        <position position="31"/>
    </location>
    <ligand>
        <name>FAD</name>
        <dbReference type="ChEBI" id="CHEBI:57692"/>
    </ligand>
</feature>
<feature type="binding site" evidence="1">
    <location>
        <position position="39"/>
    </location>
    <ligand>
        <name>FAD</name>
        <dbReference type="ChEBI" id="CHEBI:57692"/>
    </ligand>
</feature>
<feature type="binding site" evidence="1">
    <location>
        <position position="43"/>
    </location>
    <ligand>
        <name>FAD</name>
        <dbReference type="ChEBI" id="CHEBI:57692"/>
    </ligand>
</feature>
<feature type="binding site" evidence="1">
    <location>
        <position position="83"/>
    </location>
    <ligand>
        <name>FAD</name>
        <dbReference type="ChEBI" id="CHEBI:57692"/>
    </ligand>
</feature>
<feature type="binding site" evidence="1">
    <location>
        <position position="118"/>
    </location>
    <ligand>
        <name>FAD</name>
        <dbReference type="ChEBI" id="CHEBI:57692"/>
    </ligand>
</feature>
<feature type="binding site" evidence="1">
    <location>
        <position position="285"/>
    </location>
    <ligand>
        <name>FAD</name>
        <dbReference type="ChEBI" id="CHEBI:57692"/>
    </ligand>
</feature>
<feature type="binding site" evidence="1">
    <location>
        <position position="326"/>
    </location>
    <ligand>
        <name>FAD</name>
        <dbReference type="ChEBI" id="CHEBI:57692"/>
    </ligand>
</feature>
<name>FENR_STAAE</name>
<protein>
    <recommendedName>
        <fullName evidence="1">Ferredoxin--NADP reductase</fullName>
        <shortName evidence="1">FNR</shortName>
        <shortName evidence="1">Fd-NADP(+) reductase</shortName>
        <ecNumber evidence="1">1.18.1.2</ecNumber>
    </recommendedName>
</protein>
<evidence type="ECO:0000255" key="1">
    <source>
        <dbReference type="HAMAP-Rule" id="MF_01685"/>
    </source>
</evidence>
<gene>
    <name type="ordered locus">NWMN_2274</name>
</gene>
<proteinExistence type="inferred from homology"/>
<organism>
    <name type="scientific">Staphylococcus aureus (strain Newman)</name>
    <dbReference type="NCBI Taxonomy" id="426430"/>
    <lineage>
        <taxon>Bacteria</taxon>
        <taxon>Bacillati</taxon>
        <taxon>Bacillota</taxon>
        <taxon>Bacilli</taxon>
        <taxon>Bacillales</taxon>
        <taxon>Staphylococcaceae</taxon>
        <taxon>Staphylococcus</taxon>
    </lineage>
</organism>